<proteinExistence type="inferred from homology"/>
<sequence>MFYSDYLKLLKIFVVGVFPCTLFVNAPHGKLAKQSKLFSKGYISGRVGWVLMELVAPLTFLYAIRNNRHFESTLPSLGDGSNRDYLDSCRKVLAGMFLVHYANRALVSPLLMAPQVSPMHWTVFVSAVLFNFLNGMSIGLYLVQASVQHHPVSIIRRYIGMFLWLMGWLGNMYHDNILYDLRRSSNKKKDPDNLDTVQSENSYYRIPYGGLFQYVSCPNYFCEWIEWFGCYLAAGPSAEPFWWFFLSEILLMLPRALKAHQWYCKKFPKYPANRRAIIPFLM</sequence>
<reference key="1">
    <citation type="journal article" date="2002" name="Nature">
        <title>The genome sequence of Schizosaccharomyces pombe.</title>
        <authorList>
            <person name="Wood V."/>
            <person name="Gwilliam R."/>
            <person name="Rajandream M.A."/>
            <person name="Lyne M.H."/>
            <person name="Lyne R."/>
            <person name="Stewart A."/>
            <person name="Sgouros J.G."/>
            <person name="Peat N."/>
            <person name="Hayles J."/>
            <person name="Baker S.G."/>
            <person name="Basham D."/>
            <person name="Bowman S."/>
            <person name="Brooks K."/>
            <person name="Brown D."/>
            <person name="Brown S."/>
            <person name="Chillingworth T."/>
            <person name="Churcher C.M."/>
            <person name="Collins M."/>
            <person name="Connor R."/>
            <person name="Cronin A."/>
            <person name="Davis P."/>
            <person name="Feltwell T."/>
            <person name="Fraser A."/>
            <person name="Gentles S."/>
            <person name="Goble A."/>
            <person name="Hamlin N."/>
            <person name="Harris D.E."/>
            <person name="Hidalgo J."/>
            <person name="Hodgson G."/>
            <person name="Holroyd S."/>
            <person name="Hornsby T."/>
            <person name="Howarth S."/>
            <person name="Huckle E.J."/>
            <person name="Hunt S."/>
            <person name="Jagels K."/>
            <person name="James K.D."/>
            <person name="Jones L."/>
            <person name="Jones M."/>
            <person name="Leather S."/>
            <person name="McDonald S."/>
            <person name="McLean J."/>
            <person name="Mooney P."/>
            <person name="Moule S."/>
            <person name="Mungall K.L."/>
            <person name="Murphy L.D."/>
            <person name="Niblett D."/>
            <person name="Odell C."/>
            <person name="Oliver K."/>
            <person name="O'Neil S."/>
            <person name="Pearson D."/>
            <person name="Quail M.A."/>
            <person name="Rabbinowitsch E."/>
            <person name="Rutherford K.M."/>
            <person name="Rutter S."/>
            <person name="Saunders D."/>
            <person name="Seeger K."/>
            <person name="Sharp S."/>
            <person name="Skelton J."/>
            <person name="Simmonds M.N."/>
            <person name="Squares R."/>
            <person name="Squares S."/>
            <person name="Stevens K."/>
            <person name="Taylor K."/>
            <person name="Taylor R.G."/>
            <person name="Tivey A."/>
            <person name="Walsh S.V."/>
            <person name="Warren T."/>
            <person name="Whitehead S."/>
            <person name="Woodward J.R."/>
            <person name="Volckaert G."/>
            <person name="Aert R."/>
            <person name="Robben J."/>
            <person name="Grymonprez B."/>
            <person name="Weltjens I."/>
            <person name="Vanstreels E."/>
            <person name="Rieger M."/>
            <person name="Schaefer M."/>
            <person name="Mueller-Auer S."/>
            <person name="Gabel C."/>
            <person name="Fuchs M."/>
            <person name="Duesterhoeft A."/>
            <person name="Fritzc C."/>
            <person name="Holzer E."/>
            <person name="Moestl D."/>
            <person name="Hilbert H."/>
            <person name="Borzym K."/>
            <person name="Langer I."/>
            <person name="Beck A."/>
            <person name="Lehrach H."/>
            <person name="Reinhardt R."/>
            <person name="Pohl T.M."/>
            <person name="Eger P."/>
            <person name="Zimmermann W."/>
            <person name="Wedler H."/>
            <person name="Wambutt R."/>
            <person name="Purnelle B."/>
            <person name="Goffeau A."/>
            <person name="Cadieu E."/>
            <person name="Dreano S."/>
            <person name="Gloux S."/>
            <person name="Lelaure V."/>
            <person name="Mottier S."/>
            <person name="Galibert F."/>
            <person name="Aves S.J."/>
            <person name="Xiang Z."/>
            <person name="Hunt C."/>
            <person name="Moore K."/>
            <person name="Hurst S.M."/>
            <person name="Lucas M."/>
            <person name="Rochet M."/>
            <person name="Gaillardin C."/>
            <person name="Tallada V.A."/>
            <person name="Garzon A."/>
            <person name="Thode G."/>
            <person name="Daga R.R."/>
            <person name="Cruzado L."/>
            <person name="Jimenez J."/>
            <person name="Sanchez M."/>
            <person name="del Rey F."/>
            <person name="Benito J."/>
            <person name="Dominguez A."/>
            <person name="Revuelta J.L."/>
            <person name="Moreno S."/>
            <person name="Armstrong J."/>
            <person name="Forsburg S.L."/>
            <person name="Cerutti L."/>
            <person name="Lowe T."/>
            <person name="McCombie W.R."/>
            <person name="Paulsen I."/>
            <person name="Potashkin J."/>
            <person name="Shpakovski G.V."/>
            <person name="Ussery D."/>
            <person name="Barrell B.G."/>
            <person name="Nurse P."/>
        </authorList>
    </citation>
    <scope>NUCLEOTIDE SEQUENCE [LARGE SCALE GENOMIC DNA]</scope>
    <source>
        <strain>972 / ATCC 24843</strain>
    </source>
</reference>
<reference key="2">
    <citation type="journal article" date="2006" name="Nat. Biotechnol.">
        <title>ORFeome cloning and global analysis of protein localization in the fission yeast Schizosaccharomyces pombe.</title>
        <authorList>
            <person name="Matsuyama A."/>
            <person name="Arai R."/>
            <person name="Yashiroda Y."/>
            <person name="Shirai A."/>
            <person name="Kamata A."/>
            <person name="Sekido S."/>
            <person name="Kobayashi Y."/>
            <person name="Hashimoto A."/>
            <person name="Hamamoto M."/>
            <person name="Hiraoka Y."/>
            <person name="Horinouchi S."/>
            <person name="Yoshida M."/>
        </authorList>
    </citation>
    <scope>SUBCELLULAR LOCATION [LARGE SCALE ANALYSIS]</scope>
</reference>
<keyword id="KW-0256">Endoplasmic reticulum</keyword>
<keyword id="KW-0472">Membrane</keyword>
<keyword id="KW-1185">Reference proteome</keyword>
<keyword id="KW-0812">Transmembrane</keyword>
<keyword id="KW-1133">Transmembrane helix</keyword>
<protein>
    <recommendedName>
        <fullName>Uncharacterized protein C9.08c</fullName>
    </recommendedName>
</protein>
<organism>
    <name type="scientific">Schizosaccharomyces pombe (strain 972 / ATCC 24843)</name>
    <name type="common">Fission yeast</name>
    <dbReference type="NCBI Taxonomy" id="284812"/>
    <lineage>
        <taxon>Eukaryota</taxon>
        <taxon>Fungi</taxon>
        <taxon>Dikarya</taxon>
        <taxon>Ascomycota</taxon>
        <taxon>Taphrinomycotina</taxon>
        <taxon>Schizosaccharomycetes</taxon>
        <taxon>Schizosaccharomycetales</taxon>
        <taxon>Schizosaccharomycetaceae</taxon>
        <taxon>Schizosaccharomyces</taxon>
    </lineage>
</organism>
<name>YFY8_SCHPO</name>
<accession>Q9UT20</accession>
<comment type="subcellular location">
    <subcellularLocation>
        <location evidence="2">Endoplasmic reticulum membrane</location>
        <topology evidence="2">Multi-pass membrane protein</topology>
    </subcellularLocation>
</comment>
<comment type="similarity">
    <text evidence="3">Belongs to the steroid 5-alpha reductase family.</text>
</comment>
<evidence type="ECO:0000255" key="1"/>
<evidence type="ECO:0000269" key="2">
    <source>
    </source>
</evidence>
<evidence type="ECO:0000305" key="3"/>
<dbReference type="EMBL" id="CU329670">
    <property type="protein sequence ID" value="CAB57426.1"/>
    <property type="molecule type" value="Genomic_DNA"/>
</dbReference>
<dbReference type="PIR" id="T39193">
    <property type="entry name" value="T39193"/>
</dbReference>
<dbReference type="RefSeq" id="NP_593351.1">
    <property type="nucleotide sequence ID" value="NM_001018783.2"/>
</dbReference>
<dbReference type="SMR" id="Q9UT20"/>
<dbReference type="BioGRID" id="280069">
    <property type="interactions" value="7"/>
</dbReference>
<dbReference type="FunCoup" id="Q9UT20">
    <property type="interactions" value="11"/>
</dbReference>
<dbReference type="STRING" id="284812.Q9UT20"/>
<dbReference type="PaxDb" id="4896-SPAC9.08c.1"/>
<dbReference type="EnsemblFungi" id="SPAC9.08c.1">
    <property type="protein sequence ID" value="SPAC9.08c.1:pep"/>
    <property type="gene ID" value="SPAC9.08c"/>
</dbReference>
<dbReference type="KEGG" id="spo:2543655"/>
<dbReference type="PomBase" id="SPAC9.08c"/>
<dbReference type="VEuPathDB" id="FungiDB:SPAC9.08c"/>
<dbReference type="eggNOG" id="KOG1638">
    <property type="taxonomic scope" value="Eukaryota"/>
</dbReference>
<dbReference type="HOGENOM" id="CLU_065395_0_1_1"/>
<dbReference type="InParanoid" id="Q9UT20"/>
<dbReference type="OMA" id="PHYALEW"/>
<dbReference type="PhylomeDB" id="Q9UT20"/>
<dbReference type="Reactome" id="R-SPO-193048">
    <property type="pathway name" value="Androgen biosynthesis"/>
</dbReference>
<dbReference type="PRO" id="PR:Q9UT20"/>
<dbReference type="Proteomes" id="UP000002485">
    <property type="component" value="Chromosome I"/>
</dbReference>
<dbReference type="GO" id="GO:0005783">
    <property type="term" value="C:endoplasmic reticulum"/>
    <property type="evidence" value="ECO:0007005"/>
    <property type="project" value="PomBase"/>
</dbReference>
<dbReference type="GO" id="GO:0005789">
    <property type="term" value="C:endoplasmic reticulum membrane"/>
    <property type="evidence" value="ECO:0007669"/>
    <property type="project" value="UniProtKB-SubCell"/>
</dbReference>
<dbReference type="GO" id="GO:0003865">
    <property type="term" value="F:3-oxo-5-alpha-steroid 4-dehydrogenase activity"/>
    <property type="evidence" value="ECO:0007669"/>
    <property type="project" value="InterPro"/>
</dbReference>
<dbReference type="GO" id="GO:0016491">
    <property type="term" value="F:oxidoreductase activity"/>
    <property type="evidence" value="ECO:0000318"/>
    <property type="project" value="GO_Central"/>
</dbReference>
<dbReference type="GO" id="GO:0008202">
    <property type="term" value="P:steroid metabolic process"/>
    <property type="evidence" value="ECO:0000255"/>
    <property type="project" value="PomBase"/>
</dbReference>
<dbReference type="InterPro" id="IPR016636">
    <property type="entry name" value="3-oxo-5-alpha-steroid_4-DH"/>
</dbReference>
<dbReference type="InterPro" id="IPR001104">
    <property type="entry name" value="3-oxo-5_a-steroid_4-DH_C"/>
</dbReference>
<dbReference type="InterPro" id="IPR039357">
    <property type="entry name" value="SRD5A/TECR"/>
</dbReference>
<dbReference type="PANTHER" id="PTHR10556">
    <property type="entry name" value="3-OXO-5-ALPHA-STEROID 4-DEHYDROGENASE"/>
    <property type="match status" value="1"/>
</dbReference>
<dbReference type="PANTHER" id="PTHR10556:SF43">
    <property type="entry name" value="STEROID 5-ALPHA-REDUCTASE DET2"/>
    <property type="match status" value="1"/>
</dbReference>
<dbReference type="Pfam" id="PF02544">
    <property type="entry name" value="Steroid_dh"/>
    <property type="match status" value="1"/>
</dbReference>
<dbReference type="PIRSF" id="PIRSF015596">
    <property type="entry name" value="5_alpha-SR2"/>
    <property type="match status" value="1"/>
</dbReference>
<dbReference type="PROSITE" id="PS50244">
    <property type="entry name" value="S5A_REDUCTASE"/>
    <property type="match status" value="1"/>
</dbReference>
<feature type="chain" id="PRO_0000317697" description="Uncharacterized protein C9.08c">
    <location>
        <begin position="1"/>
        <end position="282"/>
    </location>
</feature>
<feature type="transmembrane region" description="Helical" evidence="1">
    <location>
        <begin position="9"/>
        <end position="29"/>
    </location>
</feature>
<feature type="transmembrane region" description="Helical" evidence="1">
    <location>
        <begin position="43"/>
        <end position="63"/>
    </location>
</feature>
<feature type="transmembrane region" description="Helical" evidence="1">
    <location>
        <begin position="123"/>
        <end position="143"/>
    </location>
</feature>
<feature type="transmembrane region" description="Helical" evidence="1">
    <location>
        <begin position="158"/>
        <end position="178"/>
    </location>
</feature>
<feature type="transmembrane region" description="Helical" evidence="1">
    <location>
        <begin position="232"/>
        <end position="252"/>
    </location>
</feature>
<gene>
    <name type="ORF">SPAC9.08c</name>
</gene>